<name>H4_PSAMI</name>
<comment type="function">
    <text>Core component of nucleosome. Nucleosomes wrap and compact DNA into chromatin, limiting DNA accessibility to the cellular machineries which require DNA as a template. Histones thereby play a central role in transcription regulation, DNA repair, DNA replication and chromosomal stability. DNA accessibility is regulated via a complex set of post-translational modifications of histones, also called histone code, and nucleosome remodeling.</text>
</comment>
<comment type="subunit">
    <text>The nucleosome is a histone octamer containing two molecules each of H2A, H2B, H3 and H4 assembled in one H3-H4 heterotetramer and two H2A-H2B heterodimers. The octamer wraps approximately 147 bp of DNA.</text>
</comment>
<comment type="subcellular location">
    <subcellularLocation>
        <location evidence="1">Nucleus</location>
    </subcellularLocation>
    <subcellularLocation>
        <location evidence="1">Chromosome</location>
    </subcellularLocation>
</comment>
<comment type="similarity">
    <text evidence="5">Belongs to the histone H4 family.</text>
</comment>
<accession>P62781</accession>
<accession>P02306</accession>
<accession>P18678</accession>
<proteinExistence type="evidence at protein level"/>
<feature type="initiator methionine" description="Removed" evidence="4">
    <location>
        <position position="1"/>
    </location>
</feature>
<feature type="chain" id="PRO_0000158352" description="Histone H4">
    <location>
        <begin position="2"/>
        <end position="103"/>
    </location>
</feature>
<feature type="DNA-binding region">
    <location>
        <begin position="17"/>
        <end position="21"/>
    </location>
</feature>
<feature type="region of interest" description="Disordered" evidence="3">
    <location>
        <begin position="1"/>
        <end position="20"/>
    </location>
</feature>
<feature type="compositionally biased region" description="Gly residues" evidence="3">
    <location>
        <begin position="1"/>
        <end position="14"/>
    </location>
</feature>
<feature type="modified residue" description="N-acetylserine" evidence="4">
    <location>
        <position position="2"/>
    </location>
</feature>
<feature type="modified residue" description="N6-acetyl-N6-methyllysine; alternate" evidence="2">
    <location>
        <position position="6"/>
    </location>
</feature>
<feature type="modified residue" description="N6-acetyl-N6-methyllysine; alternate" evidence="2">
    <location>
        <position position="13"/>
    </location>
</feature>
<feature type="modified residue" description="N6-acetyllysine" evidence="4">
    <location>
        <position position="17"/>
    </location>
</feature>
<feature type="modified residue" description="N6-methyllysine" evidence="4">
    <location>
        <position position="21"/>
    </location>
</feature>
<dbReference type="EMBL" id="X01343">
    <property type="protein sequence ID" value="CAA25630.1"/>
    <property type="molecule type" value="Genomic_DNA"/>
</dbReference>
<dbReference type="EMBL" id="M10556">
    <property type="protein sequence ID" value="AAA30024.1"/>
    <property type="molecule type" value="Genomic_DNA"/>
</dbReference>
<dbReference type="EMBL" id="U84117">
    <property type="protein sequence ID" value="AAB48834.1"/>
    <property type="molecule type" value="mRNA"/>
</dbReference>
<dbReference type="PIR" id="D93719">
    <property type="entry name" value="HSUR4"/>
</dbReference>
<dbReference type="SMR" id="P62781"/>
<dbReference type="iPTMnet" id="P62781"/>
<dbReference type="GO" id="GO:0000786">
    <property type="term" value="C:nucleosome"/>
    <property type="evidence" value="ECO:0007669"/>
    <property type="project" value="UniProtKB-KW"/>
</dbReference>
<dbReference type="GO" id="GO:0005634">
    <property type="term" value="C:nucleus"/>
    <property type="evidence" value="ECO:0007669"/>
    <property type="project" value="UniProtKB-SubCell"/>
</dbReference>
<dbReference type="GO" id="GO:0003677">
    <property type="term" value="F:DNA binding"/>
    <property type="evidence" value="ECO:0007669"/>
    <property type="project" value="UniProtKB-KW"/>
</dbReference>
<dbReference type="GO" id="GO:0046982">
    <property type="term" value="F:protein heterodimerization activity"/>
    <property type="evidence" value="ECO:0007669"/>
    <property type="project" value="InterPro"/>
</dbReference>
<dbReference type="GO" id="GO:0030527">
    <property type="term" value="F:structural constituent of chromatin"/>
    <property type="evidence" value="ECO:0007669"/>
    <property type="project" value="InterPro"/>
</dbReference>
<dbReference type="CDD" id="cd22912">
    <property type="entry name" value="HFD_H4"/>
    <property type="match status" value="1"/>
</dbReference>
<dbReference type="FunFam" id="1.10.20.10:FF:000002">
    <property type="entry name" value="Histone H4"/>
    <property type="match status" value="1"/>
</dbReference>
<dbReference type="Gene3D" id="1.10.20.10">
    <property type="entry name" value="Histone, subunit A"/>
    <property type="match status" value="1"/>
</dbReference>
<dbReference type="InterPro" id="IPR035425">
    <property type="entry name" value="CENP-T/H4_C"/>
</dbReference>
<dbReference type="InterPro" id="IPR009072">
    <property type="entry name" value="Histone-fold"/>
</dbReference>
<dbReference type="InterPro" id="IPR001951">
    <property type="entry name" value="Histone_H4"/>
</dbReference>
<dbReference type="InterPro" id="IPR019809">
    <property type="entry name" value="Histone_H4_CS"/>
</dbReference>
<dbReference type="PANTHER" id="PTHR10484">
    <property type="entry name" value="HISTONE H4"/>
    <property type="match status" value="1"/>
</dbReference>
<dbReference type="Pfam" id="PF15511">
    <property type="entry name" value="CENP-T_C"/>
    <property type="match status" value="1"/>
</dbReference>
<dbReference type="PRINTS" id="PR00623">
    <property type="entry name" value="HISTONEH4"/>
</dbReference>
<dbReference type="SMART" id="SM00417">
    <property type="entry name" value="H4"/>
    <property type="match status" value="1"/>
</dbReference>
<dbReference type="SUPFAM" id="SSF47113">
    <property type="entry name" value="Histone-fold"/>
    <property type="match status" value="1"/>
</dbReference>
<dbReference type="PROSITE" id="PS00047">
    <property type="entry name" value="HISTONE_H4"/>
    <property type="match status" value="1"/>
</dbReference>
<evidence type="ECO:0000250" key="1"/>
<evidence type="ECO:0000250" key="2">
    <source>
        <dbReference type="UniProtKB" id="P62805"/>
    </source>
</evidence>
<evidence type="ECO:0000256" key="3">
    <source>
        <dbReference type="SAM" id="MobiDB-lite"/>
    </source>
</evidence>
<evidence type="ECO:0000269" key="4">
    <source>
    </source>
</evidence>
<evidence type="ECO:0000305" key="5"/>
<sequence>MSGRGKGGKGLGKGGAKRHRKVLRDNIQGITKPAIRRLARRGGVKRISGLIYEETRGVLKVFLENVIRDAVTYCEHAKRKTVTAMDVVYALKRQGRTLYGFGG</sequence>
<organism>
    <name type="scientific">Psammechinus miliaris</name>
    <name type="common">Green sea urchin</name>
    <name type="synonym">Echinus miliaris</name>
    <dbReference type="NCBI Taxonomy" id="7660"/>
    <lineage>
        <taxon>Eukaryota</taxon>
        <taxon>Metazoa</taxon>
        <taxon>Echinodermata</taxon>
        <taxon>Eleutherozoa</taxon>
        <taxon>Echinozoa</taxon>
        <taxon>Echinoidea</taxon>
        <taxon>Euechinoidea</taxon>
        <taxon>Echinacea</taxon>
        <taxon>Camarodonta</taxon>
        <taxon>Echinidea</taxon>
        <taxon>Parechinidae</taxon>
        <taxon>Psammechinus</taxon>
    </lineage>
</organism>
<reference key="1">
    <citation type="journal article" date="1980" name="Nucleic Acids Res.">
        <title>Ubiquitous and gene-specific regulatory 5' sequences in a sea urchin histone DNA clone coding for histone protein variants.</title>
        <authorList>
            <person name="Busslinger M."/>
            <person name="Portmann R."/>
            <person name="Irminger J.C."/>
            <person name="Birnstiel M.L."/>
        </authorList>
    </citation>
    <scope>NUCLEOTIDE SEQUENCE [GENOMIC DNA]</scope>
</reference>
<reference key="2">
    <citation type="journal article" date="1997" name="Mol. Cell. Biol.">
        <title>The five cleavage-stage (CS) histones of the sea urchin are encoded by a maternally expressed family of replacement histone genes: functional equivalence of the CS H1 and frog H1M (B4) proteins.</title>
        <authorList>
            <person name="Mandl B."/>
            <person name="Brandt W.F."/>
            <person name="Superti-Furga G."/>
            <person name="Graninger P.G."/>
            <person name="Birnstiel M.L."/>
            <person name="Busslinger M."/>
        </authorList>
    </citation>
    <scope>NUCLEOTIDE SEQUENCE [MRNA]</scope>
</reference>
<reference key="3">
    <citation type="journal article" date="1976" name="FEBS Lett.">
        <title>Covalent structure of the sea urchin histone H4.</title>
        <authorList>
            <person name="Wouters-Tyrou D."/>
            <person name="Sautiere P."/>
            <person name="Biserte G."/>
        </authorList>
    </citation>
    <scope>PROTEIN SEQUENCE OF 2-103</scope>
    <scope>ACETYLATION AT SER-2 AND LYS-17</scope>
    <scope>METHYLATION AT LYS-21</scope>
</reference>
<keyword id="KW-0007">Acetylation</keyword>
<keyword id="KW-0158">Chromosome</keyword>
<keyword id="KW-0903">Direct protein sequencing</keyword>
<keyword id="KW-0238">DNA-binding</keyword>
<keyword id="KW-0488">Methylation</keyword>
<keyword id="KW-0544">Nucleosome core</keyword>
<keyword id="KW-0539">Nucleus</keyword>
<protein>
    <recommendedName>
        <fullName>Histone H4</fullName>
    </recommendedName>
</protein>